<organism>
    <name type="scientific">Salmonella paratyphi A (strain ATCC 9150 / SARB42)</name>
    <dbReference type="NCBI Taxonomy" id="295319"/>
    <lineage>
        <taxon>Bacteria</taxon>
        <taxon>Pseudomonadati</taxon>
        <taxon>Pseudomonadota</taxon>
        <taxon>Gammaproteobacteria</taxon>
        <taxon>Enterobacterales</taxon>
        <taxon>Enterobacteriaceae</taxon>
        <taxon>Salmonella</taxon>
    </lineage>
</organism>
<evidence type="ECO:0000250" key="1"/>
<reference key="1">
    <citation type="journal article" date="2004" name="Nat. Genet.">
        <title>Comparison of genome degradation in Paratyphi A and Typhi, human-restricted serovars of Salmonella enterica that cause typhoid.</title>
        <authorList>
            <person name="McClelland M."/>
            <person name="Sanderson K.E."/>
            <person name="Clifton S.W."/>
            <person name="Latreille P."/>
            <person name="Porwollik S."/>
            <person name="Sabo A."/>
            <person name="Meyer R."/>
            <person name="Bieri T."/>
            <person name="Ozersky P."/>
            <person name="McLellan M."/>
            <person name="Harkins C.R."/>
            <person name="Wang C."/>
            <person name="Nguyen C."/>
            <person name="Berghoff A."/>
            <person name="Elliott G."/>
            <person name="Kohlberg S."/>
            <person name="Strong C."/>
            <person name="Du F."/>
            <person name="Carter J."/>
            <person name="Kremizki C."/>
            <person name="Layman D."/>
            <person name="Leonard S."/>
            <person name="Sun H."/>
            <person name="Fulton L."/>
            <person name="Nash W."/>
            <person name="Miner T."/>
            <person name="Minx P."/>
            <person name="Delehaunty K."/>
            <person name="Fronick C."/>
            <person name="Magrini V."/>
            <person name="Nhan M."/>
            <person name="Warren W."/>
            <person name="Florea L."/>
            <person name="Spieth J."/>
            <person name="Wilson R.K."/>
        </authorList>
    </citation>
    <scope>NUCLEOTIDE SEQUENCE [LARGE SCALE GENOMIC DNA]</scope>
    <source>
        <strain>ATCC 9150 / SARB42</strain>
    </source>
</reference>
<feature type="chain" id="PRO_0000278297" description="Secreted effector protein PipB2">
    <location>
        <begin position="1"/>
        <end position="350"/>
    </location>
</feature>
<feature type="domain" description="Pentapeptide repeat 1">
    <location>
        <begin position="162"/>
        <end position="201"/>
    </location>
</feature>
<feature type="domain" description="Pentapeptide repeat 2">
    <location>
        <begin position="202"/>
        <end position="241"/>
    </location>
</feature>
<feature type="domain" description="Pentapeptide repeat 3">
    <location>
        <begin position="247"/>
        <end position="286"/>
    </location>
</feature>
<feature type="domain" description="Pentapeptide repeat 4">
    <location>
        <begin position="287"/>
        <end position="326"/>
    </location>
</feature>
<protein>
    <recommendedName>
        <fullName>Secreted effector protein PipB2</fullName>
    </recommendedName>
    <alternativeName>
        <fullName>Type III effector PipB2</fullName>
    </alternativeName>
</protein>
<accession>Q5PEX4</accession>
<sequence>MQRSLDSLAGMATSAFGAGTSAAMRQATSPKTILEYIINFFTCGGIRRRNETQYQELIETMAETLKSTMPDRGAPLPENIILDDMDGCRVEFNLPGENNEAGQVIVRVSKGDHSETREIPLVSFEKICRALLFRCEFSLPQDSVILTAQGGMNLKGAVLTGANLTAENLCDADLSGANLEGAVLFMADCEGANFKGANLSGTSLGDSNFKNACLEDGIMCGATLDHANLTGANLQHASLLGCSMIECNCSGANMDHTNLSGATLIRADMSGATLQGATIMAAIMEDAVLTRANLRKASFISTNLDGADLAEANLNNTCFKDCTLTHLRTEDATMSTSTQTLFNEFYSENI</sequence>
<gene>
    <name type="primary">pipB2</name>
    <name type="ordered locus">SPA2636</name>
</gene>
<name>PIPB2_SALPA</name>
<dbReference type="EMBL" id="CP000026">
    <property type="protein sequence ID" value="AAV78500.1"/>
    <property type="molecule type" value="Genomic_DNA"/>
</dbReference>
<dbReference type="RefSeq" id="WP_011233153.1">
    <property type="nucleotide sequence ID" value="NC_006511.1"/>
</dbReference>
<dbReference type="BMRB" id="Q5PEX4"/>
<dbReference type="SMR" id="Q5PEX4"/>
<dbReference type="KEGG" id="spt:SPA2636"/>
<dbReference type="HOGENOM" id="CLU_067808_0_0_6"/>
<dbReference type="Proteomes" id="UP000008185">
    <property type="component" value="Chromosome"/>
</dbReference>
<dbReference type="GO" id="GO:0005576">
    <property type="term" value="C:extracellular region"/>
    <property type="evidence" value="ECO:0007669"/>
    <property type="project" value="UniProtKB-SubCell"/>
</dbReference>
<dbReference type="GO" id="GO:0033644">
    <property type="term" value="C:host cell membrane"/>
    <property type="evidence" value="ECO:0007669"/>
    <property type="project" value="UniProtKB-SubCell"/>
</dbReference>
<dbReference type="GO" id="GO:0016020">
    <property type="term" value="C:membrane"/>
    <property type="evidence" value="ECO:0007669"/>
    <property type="project" value="UniProtKB-KW"/>
</dbReference>
<dbReference type="Gene3D" id="2.160.20.80">
    <property type="entry name" value="E3 ubiquitin-protein ligase SopA"/>
    <property type="match status" value="2"/>
</dbReference>
<dbReference type="Gene3D" id="3.30.2450.10">
    <property type="entry name" value="Secreted effector protein pipB2"/>
    <property type="match status" value="1"/>
</dbReference>
<dbReference type="InterPro" id="IPR001646">
    <property type="entry name" value="5peptide_repeat"/>
</dbReference>
<dbReference type="InterPro" id="IPR048984">
    <property type="entry name" value="PipB2_N"/>
</dbReference>
<dbReference type="NCBIfam" id="NF011743">
    <property type="entry name" value="PRK15196.1"/>
    <property type="match status" value="1"/>
</dbReference>
<dbReference type="PANTHER" id="PTHR47485">
    <property type="entry name" value="THYLAKOID LUMENAL 17.4 KDA PROTEIN, CHLOROPLASTIC"/>
    <property type="match status" value="1"/>
</dbReference>
<dbReference type="PANTHER" id="PTHR47485:SF1">
    <property type="entry name" value="THYLAKOID LUMENAL 17.4 KDA PROTEIN, CHLOROPLASTIC"/>
    <property type="match status" value="1"/>
</dbReference>
<dbReference type="Pfam" id="PF00805">
    <property type="entry name" value="Pentapeptide"/>
    <property type="match status" value="3"/>
</dbReference>
<dbReference type="Pfam" id="PF21684">
    <property type="entry name" value="PipB2_N"/>
    <property type="match status" value="1"/>
</dbReference>
<dbReference type="SUPFAM" id="SSF141571">
    <property type="entry name" value="Pentapeptide repeat-like"/>
    <property type="match status" value="1"/>
</dbReference>
<proteinExistence type="inferred from homology"/>
<keyword id="KW-1043">Host membrane</keyword>
<keyword id="KW-0472">Membrane</keyword>
<keyword id="KW-0677">Repeat</keyword>
<keyword id="KW-0964">Secreted</keyword>
<keyword id="KW-0843">Virulence</keyword>
<comment type="function">
    <text evidence="1">Effector proteins function to alter host cell physiology and promote bacterial survival in host tissues. Involved in the reorganization of late endosome/lysosome (LE/Lys) compartments in mammalian cells. Necessary and sufficient to link kinesin-1 onto the Salmonella-containing vacuole (SCV) membrane. Required for centrifugal extension of lysosomal glycoprotein-rich membrane tubules, known as Salmonella-induced filaments (Sifs), away from the SCV and toward the cell periphery. Required for virulence, but not for intracellular survival and replication in phagocytic cells (By similarity).</text>
</comment>
<comment type="subunit">
    <text evidence="1">Interacts with the host kinesin light chain (KLC), a subunit of the kinesin-1 motor complex.</text>
</comment>
<comment type="subcellular location">
    <subcellularLocation>
        <location evidence="1">Secreted</location>
    </subcellularLocation>
    <subcellularLocation>
        <location evidence="1">Host membrane</location>
    </subcellularLocation>
    <text evidence="1">Secreted via the type III secretion system 2 (SPI-2 T3SS), and delivered into the host cell.</text>
</comment>
<comment type="domain">
    <text evidence="1">Contains various tandem pentapeptide repeats in the C-terminal region. The pentapeptide motif is required to efficiently recruit kinesin-1. No position is completely conserved in these repeats, whose consensus sequence is A-[DN]-[FLM]-X-X. The C-terminal 38 amino acid residues, specifically, the C-terminal motif LFNEF, are required for peripheral localization of PipB2 and redistribution of lysosomal-associated membrane protein (LAMP). The N-terminal 225 amino acid residues are sufficient for type III translocation and association with Sifs and SCVs, but not accumulation in peripheral vesicles (By similarity).</text>
</comment>